<keyword id="KW-0002">3D-structure</keyword>
<keyword id="KW-0131">Cell cycle</keyword>
<keyword id="KW-0132">Cell division</keyword>
<keyword id="KW-0137">Centromere</keyword>
<keyword id="KW-0158">Chromosome</keyword>
<keyword id="KW-0175">Coiled coil</keyword>
<keyword id="KW-0995">Kinetochore</keyword>
<keyword id="KW-0469">Meiosis</keyword>
<keyword id="KW-0498">Mitosis</keyword>
<keyword id="KW-0539">Nucleus</keyword>
<keyword id="KW-1185">Reference proteome</keyword>
<dbReference type="EMBL" id="U20618">
    <property type="protein sequence ID" value="AAB64519.1"/>
    <property type="molecule type" value="Genomic_DNA"/>
</dbReference>
<dbReference type="EMBL" id="AY692848">
    <property type="protein sequence ID" value="AAT92867.1"/>
    <property type="molecule type" value="Genomic_DNA"/>
</dbReference>
<dbReference type="EMBL" id="BK006945">
    <property type="protein sequence ID" value="DAA09625.1"/>
    <property type="molecule type" value="Genomic_DNA"/>
</dbReference>
<dbReference type="PIR" id="S53394">
    <property type="entry name" value="S53394"/>
</dbReference>
<dbReference type="RefSeq" id="NP_013419.1">
    <property type="nucleotide sequence ID" value="NM_001182204.1"/>
</dbReference>
<dbReference type="PDB" id="6NUW">
    <property type="method" value="EM"/>
    <property type="resolution" value="4.25 A"/>
    <property type="chains" value="J=1-153"/>
</dbReference>
<dbReference type="PDB" id="6QLD">
    <property type="method" value="EM"/>
    <property type="resolution" value="4.15 A"/>
    <property type="chains" value="Z=3-153"/>
</dbReference>
<dbReference type="PDB" id="6QLE">
    <property type="method" value="EM"/>
    <property type="resolution" value="3.55 A"/>
    <property type="chains" value="Z=1-153"/>
</dbReference>
<dbReference type="PDB" id="6QLF">
    <property type="method" value="EM"/>
    <property type="resolution" value="3.45 A"/>
    <property type="chains" value="Z=1-153"/>
</dbReference>
<dbReference type="PDB" id="8OVW">
    <property type="method" value="EM"/>
    <property type="resolution" value="3.40 A"/>
    <property type="chains" value="Z=1-153"/>
</dbReference>
<dbReference type="PDB" id="8OVX">
    <property type="method" value="EM"/>
    <property type="resolution" value="3.40 A"/>
    <property type="chains" value="Z=1-153"/>
</dbReference>
<dbReference type="PDB" id="8OW0">
    <property type="method" value="EM"/>
    <property type="resolution" value="3.40 A"/>
    <property type="chains" value="Z=1-153"/>
</dbReference>
<dbReference type="PDB" id="8OW1">
    <property type="method" value="EM"/>
    <property type="resolution" value="3.70 A"/>
    <property type="chains" value="Z/ZZ=1-153"/>
</dbReference>
<dbReference type="PDBsum" id="6NUW"/>
<dbReference type="PDBsum" id="6QLD"/>
<dbReference type="PDBsum" id="6QLE"/>
<dbReference type="PDBsum" id="6QLF"/>
<dbReference type="PDBsum" id="8OVW"/>
<dbReference type="PDBsum" id="8OVX"/>
<dbReference type="PDBsum" id="8OW0"/>
<dbReference type="PDBsum" id="8OW1"/>
<dbReference type="EMDB" id="EMD-0523"/>
<dbReference type="EMDB" id="EMD-17224"/>
<dbReference type="EMDB" id="EMD-17225"/>
<dbReference type="EMDB" id="EMD-17226"/>
<dbReference type="EMDB" id="EMD-17227"/>
<dbReference type="EMDB" id="EMD-4579"/>
<dbReference type="EMDB" id="EMD-4580"/>
<dbReference type="EMDB" id="EMD-4581"/>
<dbReference type="SMR" id="Q06162"/>
<dbReference type="BioGRID" id="31580">
    <property type="interactions" value="270"/>
</dbReference>
<dbReference type="ComplexPortal" id="CPX-1156">
    <property type="entry name" value="Central kinetochore CTF19 complex"/>
</dbReference>
<dbReference type="ComplexPortal" id="CPX-2533">
    <property type="entry name" value="Kinetochore CCAN complex"/>
</dbReference>
<dbReference type="DIP" id="DIP-1939N"/>
<dbReference type="FunCoup" id="Q06162">
    <property type="interactions" value="97"/>
</dbReference>
<dbReference type="IntAct" id="Q06162">
    <property type="interactions" value="14"/>
</dbReference>
<dbReference type="MINT" id="Q06162"/>
<dbReference type="STRING" id="4932.YLR315W"/>
<dbReference type="iPTMnet" id="Q06162"/>
<dbReference type="PaxDb" id="4932-YLR315W"/>
<dbReference type="PeptideAtlas" id="Q06162"/>
<dbReference type="EnsemblFungi" id="YLR315W_mRNA">
    <property type="protein sequence ID" value="YLR315W"/>
    <property type="gene ID" value="YLR315W"/>
</dbReference>
<dbReference type="GeneID" id="851025"/>
<dbReference type="KEGG" id="sce:YLR315W"/>
<dbReference type="AGR" id="SGD:S000004307"/>
<dbReference type="SGD" id="S000004307">
    <property type="gene designation" value="NKP2"/>
</dbReference>
<dbReference type="VEuPathDB" id="FungiDB:YLR315W"/>
<dbReference type="eggNOG" id="ENOG502SFRX">
    <property type="taxonomic scope" value="Eukaryota"/>
</dbReference>
<dbReference type="HOGENOM" id="CLU_135200_0_0_1"/>
<dbReference type="InParanoid" id="Q06162"/>
<dbReference type="OMA" id="ATCTETR"/>
<dbReference type="OrthoDB" id="4052652at2759"/>
<dbReference type="BioCyc" id="YEAST:G3O-32401-MONOMER"/>
<dbReference type="BioGRID-ORCS" id="851025">
    <property type="hits" value="8 hits in 10 CRISPR screens"/>
</dbReference>
<dbReference type="PRO" id="PR:Q06162"/>
<dbReference type="Proteomes" id="UP000002311">
    <property type="component" value="Chromosome XII"/>
</dbReference>
<dbReference type="RNAct" id="Q06162">
    <property type="molecule type" value="protein"/>
</dbReference>
<dbReference type="GO" id="GO:0000776">
    <property type="term" value="C:kinetochore"/>
    <property type="evidence" value="ECO:0000314"/>
    <property type="project" value="SGD"/>
</dbReference>
<dbReference type="GO" id="GO:0031511">
    <property type="term" value="C:Mis6-Sim4 complex"/>
    <property type="evidence" value="ECO:0000318"/>
    <property type="project" value="GO_Central"/>
</dbReference>
<dbReference type="GO" id="GO:0005634">
    <property type="term" value="C:nucleus"/>
    <property type="evidence" value="ECO:0007669"/>
    <property type="project" value="UniProtKB-SubCell"/>
</dbReference>
<dbReference type="GO" id="GO:0008608">
    <property type="term" value="P:attachment of spindle microtubules to kinetochore"/>
    <property type="evidence" value="ECO:0000303"/>
    <property type="project" value="ComplexPortal"/>
</dbReference>
<dbReference type="GO" id="GO:0051301">
    <property type="term" value="P:cell division"/>
    <property type="evidence" value="ECO:0007669"/>
    <property type="project" value="UniProtKB-KW"/>
</dbReference>
<dbReference type="GO" id="GO:0007059">
    <property type="term" value="P:chromosome segregation"/>
    <property type="evidence" value="ECO:0000315"/>
    <property type="project" value="SGD"/>
</dbReference>
<dbReference type="GO" id="GO:0051321">
    <property type="term" value="P:meiotic cell cycle"/>
    <property type="evidence" value="ECO:0007669"/>
    <property type="project" value="UniProtKB-KW"/>
</dbReference>
<dbReference type="InterPro" id="IPR018565">
    <property type="entry name" value="Nkp2/Cnl2"/>
</dbReference>
<dbReference type="PANTHER" id="PTHR28064">
    <property type="entry name" value="INNER KINETOCHORE SUBUNIT NKP2"/>
    <property type="match status" value="1"/>
</dbReference>
<dbReference type="PANTHER" id="PTHR28064:SF1">
    <property type="entry name" value="INNER KINETOCHORE SUBUNIT NKP2"/>
    <property type="match status" value="1"/>
</dbReference>
<dbReference type="Pfam" id="PF09447">
    <property type="entry name" value="Cnl2_NKP2"/>
    <property type="match status" value="1"/>
</dbReference>
<gene>
    <name type="primary">NKP2</name>
    <name type="ordered locus">YLR315W</name>
</gene>
<comment type="function">
    <text evidence="6">Component of the kinetochore, a multiprotein complex that assembles on centromeric DNA and attaches chromosomes to spindle microtubules, mediating chromosome segregation and sister chromatid segregation during meiosis and mitosis. Component of the inner kinetochore constitutive centromere-associated network (CCAN), which serves as a structural platform for outer kinetochore assembly.</text>
</comment>
<comment type="subunit">
    <text evidence="1 6">Component of the inner kinetochore constitutive centromere-associated network (CCAN) (also known as central kinetochore CTF19 complex in yeast), which is composed of at least AME1, CHL4, CNN1, CTF3, CTF19, IML3, MCM16, MCM21, MCM22, MHF1, MHF2, MIF2, NKP1, NKP2, OKP1 and WIP1 (PubMed:22561346). NKP1 interacts directly with OKP1 and AME1 (By similarity).</text>
</comment>
<comment type="interaction">
    <interactant intactId="EBI-34256">
        <id>Q06162</id>
    </interactant>
    <interactant intactId="EBI-35840">
        <id>Q12493</id>
        <label>NKP1</label>
    </interactant>
    <organismsDiffer>false</organismsDiffer>
    <experiments>4</experiments>
</comment>
<comment type="subcellular location">
    <subcellularLocation>
        <location evidence="4">Nucleus</location>
    </subcellularLocation>
    <subcellularLocation>
        <location evidence="3 7">Chromosome</location>
        <location evidence="3 7">Centromere</location>
        <location evidence="3 7">Kinetochore</location>
    </subcellularLocation>
    <text>Associated with kinetochores (PubMed:12408861).</text>
</comment>
<comment type="miscellaneous">
    <text evidence="5">Present with 1630 molecules/cell in log phase SD medium.</text>
</comment>
<comment type="similarity">
    <text evidence="8">Belongs to the NKP2 family.</text>
</comment>
<feature type="chain" id="PRO_0000096868" description="Inner kinetochore subunit NKP2">
    <location>
        <begin position="1"/>
        <end position="153"/>
    </location>
</feature>
<feature type="coiled-coil region" evidence="2">
    <location>
        <begin position="86"/>
        <end position="128"/>
    </location>
</feature>
<feature type="helix" evidence="9">
    <location>
        <begin position="4"/>
        <end position="12"/>
    </location>
</feature>
<feature type="helix" evidence="9">
    <location>
        <begin position="16"/>
        <end position="19"/>
    </location>
</feature>
<feature type="helix" evidence="9">
    <location>
        <begin position="22"/>
        <end position="28"/>
    </location>
</feature>
<feature type="turn" evidence="9">
    <location>
        <begin position="29"/>
        <end position="32"/>
    </location>
</feature>
<feature type="helix" evidence="9">
    <location>
        <begin position="36"/>
        <end position="83"/>
    </location>
</feature>
<feature type="helix" evidence="9">
    <location>
        <begin position="87"/>
        <end position="126"/>
    </location>
</feature>
<feature type="turn" evidence="9">
    <location>
        <begin position="132"/>
        <end position="134"/>
    </location>
</feature>
<feature type="helix" evidence="9">
    <location>
        <begin position="135"/>
        <end position="152"/>
    </location>
</feature>
<name>NKP2_YEAST</name>
<proteinExistence type="evidence at protein level"/>
<sequence>MNSEQLLHNYVSDSLLTTLISFQEFKQQLQSYTSDEQQLQHWYELLQARDARVTSELEARIKQFFITLRSRLLRFLESEQLSHSLSLETLIDALYKINDLLQQRLQILDDAIQEKTSELAEFENMVRSPSAGDNAIPGLLQIIQSYINLLEEN</sequence>
<reference key="1">
    <citation type="journal article" date="1997" name="Nature">
        <title>The nucleotide sequence of Saccharomyces cerevisiae chromosome XII.</title>
        <authorList>
            <person name="Johnston M."/>
            <person name="Hillier L.W."/>
            <person name="Riles L."/>
            <person name="Albermann K."/>
            <person name="Andre B."/>
            <person name="Ansorge W."/>
            <person name="Benes V."/>
            <person name="Brueckner M."/>
            <person name="Delius H."/>
            <person name="Dubois E."/>
            <person name="Duesterhoeft A."/>
            <person name="Entian K.-D."/>
            <person name="Floeth M."/>
            <person name="Goffeau A."/>
            <person name="Hebling U."/>
            <person name="Heumann K."/>
            <person name="Heuss-Neitzel D."/>
            <person name="Hilbert H."/>
            <person name="Hilger F."/>
            <person name="Kleine K."/>
            <person name="Koetter P."/>
            <person name="Louis E.J."/>
            <person name="Messenguy F."/>
            <person name="Mewes H.-W."/>
            <person name="Miosga T."/>
            <person name="Moestl D."/>
            <person name="Mueller-Auer S."/>
            <person name="Nentwich U."/>
            <person name="Obermaier B."/>
            <person name="Piravandi E."/>
            <person name="Pohl T.M."/>
            <person name="Portetelle D."/>
            <person name="Purnelle B."/>
            <person name="Rechmann S."/>
            <person name="Rieger M."/>
            <person name="Rinke M."/>
            <person name="Rose M."/>
            <person name="Scharfe M."/>
            <person name="Scherens B."/>
            <person name="Scholler P."/>
            <person name="Schwager C."/>
            <person name="Schwarz S."/>
            <person name="Underwood A.P."/>
            <person name="Urrestarazu L.A."/>
            <person name="Vandenbol M."/>
            <person name="Verhasselt P."/>
            <person name="Vierendeels F."/>
            <person name="Voet M."/>
            <person name="Volckaert G."/>
            <person name="Voss H."/>
            <person name="Wambutt R."/>
            <person name="Wedler E."/>
            <person name="Wedler H."/>
            <person name="Zimmermann F.K."/>
            <person name="Zollner A."/>
            <person name="Hani J."/>
            <person name="Hoheisel J.D."/>
        </authorList>
    </citation>
    <scope>NUCLEOTIDE SEQUENCE [LARGE SCALE GENOMIC DNA]</scope>
    <source>
        <strain>ATCC 204508 / S288c</strain>
    </source>
</reference>
<reference key="2">
    <citation type="journal article" date="2014" name="G3 (Bethesda)">
        <title>The reference genome sequence of Saccharomyces cerevisiae: Then and now.</title>
        <authorList>
            <person name="Engel S.R."/>
            <person name="Dietrich F.S."/>
            <person name="Fisk D.G."/>
            <person name="Binkley G."/>
            <person name="Balakrishnan R."/>
            <person name="Costanzo M.C."/>
            <person name="Dwight S.S."/>
            <person name="Hitz B.C."/>
            <person name="Karra K."/>
            <person name="Nash R.S."/>
            <person name="Weng S."/>
            <person name="Wong E.D."/>
            <person name="Lloyd P."/>
            <person name="Skrzypek M.S."/>
            <person name="Miyasato S.R."/>
            <person name="Simison M."/>
            <person name="Cherry J.M."/>
        </authorList>
    </citation>
    <scope>GENOME REANNOTATION</scope>
    <source>
        <strain>ATCC 204508 / S288c</strain>
    </source>
</reference>
<reference key="3">
    <citation type="journal article" date="2007" name="Genome Res.">
        <title>Approaching a complete repository of sequence-verified protein-encoding clones for Saccharomyces cerevisiae.</title>
        <authorList>
            <person name="Hu Y."/>
            <person name="Rolfs A."/>
            <person name="Bhullar B."/>
            <person name="Murthy T.V.S."/>
            <person name="Zhu C."/>
            <person name="Berger M.F."/>
            <person name="Camargo A.A."/>
            <person name="Kelley F."/>
            <person name="McCarron S."/>
            <person name="Jepson D."/>
            <person name="Richardson A."/>
            <person name="Raphael J."/>
            <person name="Moreira D."/>
            <person name="Taycher E."/>
            <person name="Zuo D."/>
            <person name="Mohr S."/>
            <person name="Kane M.F."/>
            <person name="Williamson J."/>
            <person name="Simpson A.J.G."/>
            <person name="Bulyk M.L."/>
            <person name="Harlow E."/>
            <person name="Marsischky G."/>
            <person name="Kolodner R.D."/>
            <person name="LaBaer J."/>
        </authorList>
    </citation>
    <scope>NUCLEOTIDE SEQUENCE [GENOMIC DNA]</scope>
    <source>
        <strain>ATCC 204508 / S288c</strain>
    </source>
</reference>
<reference key="4">
    <citation type="journal article" date="2002" name="Cell">
        <title>Phospho-regulation of kinetochore-microtubule attachments by the Aurora kinase Ipl1p.</title>
        <authorList>
            <person name="Cheeseman I.M."/>
            <person name="Anderson S."/>
            <person name="Jwa M."/>
            <person name="Green E.M."/>
            <person name="Kang J.-S."/>
            <person name="Yates J.R. III"/>
            <person name="Chan C.S.M."/>
            <person name="Drubin D.G."/>
            <person name="Barnes G."/>
        </authorList>
    </citation>
    <scope>IDENTIFICATION BY MASS SPECTROMETRY</scope>
    <scope>COMPONENT OF CTF19 COMPLEX</scope>
    <scope>SUBCELLULAR LOCATION</scope>
</reference>
<reference key="5">
    <citation type="journal article" date="2003" name="Nature">
        <title>Global analysis of protein localization in budding yeast.</title>
        <authorList>
            <person name="Huh W.-K."/>
            <person name="Falvo J.V."/>
            <person name="Gerke L.C."/>
            <person name="Carroll A.S."/>
            <person name="Howson R.W."/>
            <person name="Weissman J.S."/>
            <person name="O'Shea E.K."/>
        </authorList>
    </citation>
    <scope>SUBCELLULAR LOCATION [LARGE SCALE ANALYSIS]</scope>
</reference>
<reference key="6">
    <citation type="journal article" date="2003" name="Nature">
        <title>Global analysis of protein expression in yeast.</title>
        <authorList>
            <person name="Ghaemmaghami S."/>
            <person name="Huh W.-K."/>
            <person name="Bower K."/>
            <person name="Howson R.W."/>
            <person name="Belle A."/>
            <person name="Dephoure N."/>
            <person name="O'Shea E.K."/>
            <person name="Weissman J.S."/>
        </authorList>
    </citation>
    <scope>LEVEL OF PROTEIN EXPRESSION [LARGE SCALE ANALYSIS]</scope>
</reference>
<reference key="7">
    <citation type="journal article" date="2012" name="Nat. Cell Biol.">
        <title>CENP-T proteins are conserved centromere receptors of the Ndc80 complex.</title>
        <authorList>
            <person name="Schleiffer A."/>
            <person name="Maier M."/>
            <person name="Litos G."/>
            <person name="Lampert F."/>
            <person name="Hornung P."/>
            <person name="Mechtler K."/>
            <person name="Westermann S."/>
        </authorList>
    </citation>
    <scope>IDENTIFICATION IN CCAN</scope>
    <scope>SUBUNIT</scope>
</reference>
<reference key="8">
    <citation type="journal article" date="2017" name="EMBO J.">
        <title>Molecular basis for inner kinetochore configuration through RWD domain-peptide interactions.</title>
        <authorList>
            <person name="Schmitzberger F."/>
            <person name="Richter M.M."/>
            <person name="Gordiyenko Y."/>
            <person name="Robinson C.V."/>
            <person name="Dadlez M."/>
            <person name="Westermann S."/>
        </authorList>
    </citation>
    <scope>SUBCELLULAR LOCATION</scope>
</reference>
<accession>Q06162</accession>
<accession>D6VYV9</accession>
<organism>
    <name type="scientific">Saccharomyces cerevisiae (strain ATCC 204508 / S288c)</name>
    <name type="common">Baker's yeast</name>
    <dbReference type="NCBI Taxonomy" id="559292"/>
    <lineage>
        <taxon>Eukaryota</taxon>
        <taxon>Fungi</taxon>
        <taxon>Dikarya</taxon>
        <taxon>Ascomycota</taxon>
        <taxon>Saccharomycotina</taxon>
        <taxon>Saccharomycetes</taxon>
        <taxon>Saccharomycetales</taxon>
        <taxon>Saccharomycetaceae</taxon>
        <taxon>Saccharomyces</taxon>
    </lineage>
</organism>
<evidence type="ECO:0000250" key="1">
    <source>
        <dbReference type="UniProtKB" id="Q6CSR8"/>
    </source>
</evidence>
<evidence type="ECO:0000255" key="2"/>
<evidence type="ECO:0000269" key="3">
    <source>
    </source>
</evidence>
<evidence type="ECO:0000269" key="4">
    <source>
    </source>
</evidence>
<evidence type="ECO:0000269" key="5">
    <source>
    </source>
</evidence>
<evidence type="ECO:0000269" key="6">
    <source>
    </source>
</evidence>
<evidence type="ECO:0000269" key="7">
    <source>
    </source>
</evidence>
<evidence type="ECO:0000305" key="8"/>
<evidence type="ECO:0007829" key="9">
    <source>
        <dbReference type="PDB" id="8OVW"/>
    </source>
</evidence>
<protein>
    <recommendedName>
        <fullName evidence="8">Inner kinetochore subunit NKP2</fullName>
    </recommendedName>
    <alternativeName>
        <fullName evidence="8">Constitutive centromere-associated network protein NKP2</fullName>
    </alternativeName>
    <alternativeName>
        <fullName>Non-essential kinetochore protein 2</fullName>
    </alternativeName>
</protein>